<protein>
    <recommendedName>
        <fullName evidence="1">Small ribosomal subunit protein uS14B</fullName>
    </recommendedName>
    <alternativeName>
        <fullName evidence="2">30S ribosomal protein S14 type Z</fullName>
    </alternativeName>
</protein>
<proteinExistence type="inferred from homology"/>
<dbReference type="EMBL" id="AL935263">
    <property type="protein sequence ID" value="CCC78457.1"/>
    <property type="molecule type" value="Genomic_DNA"/>
</dbReference>
<dbReference type="RefSeq" id="WP_003638073.1">
    <property type="nucleotide sequence ID" value="NC_004567.2"/>
</dbReference>
<dbReference type="RefSeq" id="YP_004888971.1">
    <property type="nucleotide sequence ID" value="NC_004567.2"/>
</dbReference>
<dbReference type="SMR" id="Q88XX3"/>
<dbReference type="STRING" id="220668.lp_1048"/>
<dbReference type="EnsemblBacteria" id="CCC78457">
    <property type="protein sequence ID" value="CCC78457"/>
    <property type="gene ID" value="lp_1048"/>
</dbReference>
<dbReference type="KEGG" id="lpl:lp_1048"/>
<dbReference type="PATRIC" id="fig|220668.9.peg.884"/>
<dbReference type="eggNOG" id="COG0199">
    <property type="taxonomic scope" value="Bacteria"/>
</dbReference>
<dbReference type="HOGENOM" id="CLU_139869_3_0_9"/>
<dbReference type="OrthoDB" id="9810484at2"/>
<dbReference type="PhylomeDB" id="Q88XX3"/>
<dbReference type="Proteomes" id="UP000000432">
    <property type="component" value="Chromosome"/>
</dbReference>
<dbReference type="GO" id="GO:0015935">
    <property type="term" value="C:small ribosomal subunit"/>
    <property type="evidence" value="ECO:0007669"/>
    <property type="project" value="TreeGrafter"/>
</dbReference>
<dbReference type="GO" id="GO:0019843">
    <property type="term" value="F:rRNA binding"/>
    <property type="evidence" value="ECO:0007669"/>
    <property type="project" value="UniProtKB-UniRule"/>
</dbReference>
<dbReference type="GO" id="GO:0003735">
    <property type="term" value="F:structural constituent of ribosome"/>
    <property type="evidence" value="ECO:0007669"/>
    <property type="project" value="InterPro"/>
</dbReference>
<dbReference type="GO" id="GO:0008270">
    <property type="term" value="F:zinc ion binding"/>
    <property type="evidence" value="ECO:0007669"/>
    <property type="project" value="UniProtKB-UniRule"/>
</dbReference>
<dbReference type="GO" id="GO:0006412">
    <property type="term" value="P:translation"/>
    <property type="evidence" value="ECO:0007669"/>
    <property type="project" value="UniProtKB-UniRule"/>
</dbReference>
<dbReference type="FunFam" id="4.10.830.10:FF:000001">
    <property type="entry name" value="30S ribosomal protein S14 type Z"/>
    <property type="match status" value="1"/>
</dbReference>
<dbReference type="Gene3D" id="4.10.830.10">
    <property type="entry name" value="30s Ribosomal Protein S14, Chain N"/>
    <property type="match status" value="1"/>
</dbReference>
<dbReference type="HAMAP" id="MF_01364_B">
    <property type="entry name" value="Ribosomal_uS14_2_B"/>
    <property type="match status" value="1"/>
</dbReference>
<dbReference type="InterPro" id="IPR001209">
    <property type="entry name" value="Ribosomal_uS14"/>
</dbReference>
<dbReference type="InterPro" id="IPR023053">
    <property type="entry name" value="Ribosomal_uS14_bact"/>
</dbReference>
<dbReference type="InterPro" id="IPR018271">
    <property type="entry name" value="Ribosomal_uS14_CS"/>
</dbReference>
<dbReference type="InterPro" id="IPR043140">
    <property type="entry name" value="Ribosomal_uS14_sf"/>
</dbReference>
<dbReference type="NCBIfam" id="NF005974">
    <property type="entry name" value="PRK08061.1"/>
    <property type="match status" value="1"/>
</dbReference>
<dbReference type="PANTHER" id="PTHR19836">
    <property type="entry name" value="30S RIBOSOMAL PROTEIN S14"/>
    <property type="match status" value="1"/>
</dbReference>
<dbReference type="PANTHER" id="PTHR19836:SF26">
    <property type="entry name" value="SMALL RIBOSOMAL SUBUNIT PROTEIN US14B"/>
    <property type="match status" value="1"/>
</dbReference>
<dbReference type="Pfam" id="PF00253">
    <property type="entry name" value="Ribosomal_S14"/>
    <property type="match status" value="1"/>
</dbReference>
<dbReference type="SUPFAM" id="SSF57716">
    <property type="entry name" value="Glucocorticoid receptor-like (DNA-binding domain)"/>
    <property type="match status" value="1"/>
</dbReference>
<dbReference type="PROSITE" id="PS00527">
    <property type="entry name" value="RIBOSOMAL_S14"/>
    <property type="match status" value="1"/>
</dbReference>
<evidence type="ECO:0000255" key="1">
    <source>
        <dbReference type="HAMAP-Rule" id="MF_01364"/>
    </source>
</evidence>
<evidence type="ECO:0000305" key="2"/>
<keyword id="KW-0479">Metal-binding</keyword>
<keyword id="KW-1185">Reference proteome</keyword>
<keyword id="KW-0687">Ribonucleoprotein</keyword>
<keyword id="KW-0689">Ribosomal protein</keyword>
<keyword id="KW-0694">RNA-binding</keyword>
<keyword id="KW-0699">rRNA-binding</keyword>
<keyword id="KW-0862">Zinc</keyword>
<feature type="chain" id="PRO_0000269108" description="Small ribosomal subunit protein uS14B">
    <location>
        <begin position="1"/>
        <end position="61"/>
    </location>
</feature>
<feature type="binding site" evidence="1">
    <location>
        <position position="24"/>
    </location>
    <ligand>
        <name>Zn(2+)</name>
        <dbReference type="ChEBI" id="CHEBI:29105"/>
    </ligand>
</feature>
<feature type="binding site" evidence="1">
    <location>
        <position position="27"/>
    </location>
    <ligand>
        <name>Zn(2+)</name>
        <dbReference type="ChEBI" id="CHEBI:29105"/>
    </ligand>
</feature>
<feature type="binding site" evidence="1">
    <location>
        <position position="40"/>
    </location>
    <ligand>
        <name>Zn(2+)</name>
        <dbReference type="ChEBI" id="CHEBI:29105"/>
    </ligand>
</feature>
<feature type="binding site" evidence="1">
    <location>
        <position position="43"/>
    </location>
    <ligand>
        <name>Zn(2+)</name>
        <dbReference type="ChEBI" id="CHEBI:29105"/>
    </ligand>
</feature>
<gene>
    <name evidence="1" type="primary">rpsZ</name>
    <name evidence="1" type="synonym">rpsN</name>
    <name type="ordered locus">lp_1048</name>
</gene>
<comment type="function">
    <text evidence="1">Binds 16S rRNA, required for the assembly of 30S particles and may also be responsible for determining the conformation of the 16S rRNA at the A site.</text>
</comment>
<comment type="cofactor">
    <cofactor evidence="1">
        <name>Zn(2+)</name>
        <dbReference type="ChEBI" id="CHEBI:29105"/>
    </cofactor>
    <text evidence="1">Binds 1 zinc ion per subunit.</text>
</comment>
<comment type="subunit">
    <text evidence="1">Part of the 30S ribosomal subunit. Contacts proteins S3 and S10.</text>
</comment>
<comment type="similarity">
    <text evidence="1">Belongs to the universal ribosomal protein uS14 family. Zinc-binding uS14 subfamily.</text>
</comment>
<name>RS14Z_LACPL</name>
<organism>
    <name type="scientific">Lactiplantibacillus plantarum (strain ATCC BAA-793 / NCIMB 8826 / WCFS1)</name>
    <name type="common">Lactobacillus plantarum</name>
    <dbReference type="NCBI Taxonomy" id="220668"/>
    <lineage>
        <taxon>Bacteria</taxon>
        <taxon>Bacillati</taxon>
        <taxon>Bacillota</taxon>
        <taxon>Bacilli</taxon>
        <taxon>Lactobacillales</taxon>
        <taxon>Lactobacillaceae</taxon>
        <taxon>Lactiplantibacillus</taxon>
    </lineage>
</organism>
<accession>Q88XX3</accession>
<accession>F9UML8</accession>
<sequence length="61" mass="7161">MAKKSQIAKQKRGAKFNVQNYTRCERCGRPHSVYRKFHLCRICLRDLAHKGQIPGMKKASW</sequence>
<reference key="1">
    <citation type="journal article" date="2003" name="Proc. Natl. Acad. Sci. U.S.A.">
        <title>Complete genome sequence of Lactobacillus plantarum WCFS1.</title>
        <authorList>
            <person name="Kleerebezem M."/>
            <person name="Boekhorst J."/>
            <person name="van Kranenburg R."/>
            <person name="Molenaar D."/>
            <person name="Kuipers O.P."/>
            <person name="Leer R."/>
            <person name="Tarchini R."/>
            <person name="Peters S.A."/>
            <person name="Sandbrink H.M."/>
            <person name="Fiers M.W.E.J."/>
            <person name="Stiekema W."/>
            <person name="Klein Lankhorst R.M."/>
            <person name="Bron P.A."/>
            <person name="Hoffer S.M."/>
            <person name="Nierop Groot M.N."/>
            <person name="Kerkhoven R."/>
            <person name="De Vries M."/>
            <person name="Ursing B."/>
            <person name="De Vos W.M."/>
            <person name="Siezen R.J."/>
        </authorList>
    </citation>
    <scope>NUCLEOTIDE SEQUENCE [LARGE SCALE GENOMIC DNA]</scope>
    <source>
        <strain>ATCC BAA-793 / NCIMB 8826 / WCFS1</strain>
    </source>
</reference>
<reference key="2">
    <citation type="journal article" date="2012" name="J. Bacteriol.">
        <title>Complete resequencing and reannotation of the Lactobacillus plantarum WCFS1 genome.</title>
        <authorList>
            <person name="Siezen R.J."/>
            <person name="Francke C."/>
            <person name="Renckens B."/>
            <person name="Boekhorst J."/>
            <person name="Wels M."/>
            <person name="Kleerebezem M."/>
            <person name="van Hijum S.A."/>
        </authorList>
    </citation>
    <scope>NUCLEOTIDE SEQUENCE [LARGE SCALE GENOMIC DNA]</scope>
    <scope>GENOME REANNOTATION</scope>
    <source>
        <strain>ATCC BAA-793 / NCIMB 8826 / WCFS1</strain>
    </source>
</reference>